<dbReference type="EC" id="5.4.2.12" evidence="1"/>
<dbReference type="EMBL" id="CP001364">
    <property type="protein sequence ID" value="ACM52673.1"/>
    <property type="molecule type" value="Genomic_DNA"/>
</dbReference>
<dbReference type="SMR" id="B9LBA2"/>
<dbReference type="KEGG" id="chl:Chy400_1252"/>
<dbReference type="HOGENOM" id="CLU_026099_2_0_0"/>
<dbReference type="OrthoDB" id="9800863at2"/>
<dbReference type="UniPathway" id="UPA00109">
    <property type="reaction ID" value="UER00186"/>
</dbReference>
<dbReference type="GO" id="GO:0005829">
    <property type="term" value="C:cytosol"/>
    <property type="evidence" value="ECO:0007669"/>
    <property type="project" value="TreeGrafter"/>
</dbReference>
<dbReference type="GO" id="GO:0030145">
    <property type="term" value="F:manganese ion binding"/>
    <property type="evidence" value="ECO:0007669"/>
    <property type="project" value="UniProtKB-UniRule"/>
</dbReference>
<dbReference type="GO" id="GO:0004619">
    <property type="term" value="F:phosphoglycerate mutase activity"/>
    <property type="evidence" value="ECO:0007669"/>
    <property type="project" value="UniProtKB-EC"/>
</dbReference>
<dbReference type="GO" id="GO:0006007">
    <property type="term" value="P:glucose catabolic process"/>
    <property type="evidence" value="ECO:0007669"/>
    <property type="project" value="InterPro"/>
</dbReference>
<dbReference type="GO" id="GO:0006096">
    <property type="term" value="P:glycolytic process"/>
    <property type="evidence" value="ECO:0007669"/>
    <property type="project" value="UniProtKB-UniRule"/>
</dbReference>
<dbReference type="CDD" id="cd16010">
    <property type="entry name" value="iPGM"/>
    <property type="match status" value="1"/>
</dbReference>
<dbReference type="FunFam" id="3.40.1450.10:FF:000001">
    <property type="entry name" value="2,3-bisphosphoglycerate-independent phosphoglycerate mutase"/>
    <property type="match status" value="1"/>
</dbReference>
<dbReference type="Gene3D" id="3.40.720.10">
    <property type="entry name" value="Alkaline Phosphatase, subunit A"/>
    <property type="match status" value="1"/>
</dbReference>
<dbReference type="Gene3D" id="3.40.1450.10">
    <property type="entry name" value="BPG-independent phosphoglycerate mutase, domain B"/>
    <property type="match status" value="1"/>
</dbReference>
<dbReference type="HAMAP" id="MF_01038">
    <property type="entry name" value="GpmI"/>
    <property type="match status" value="1"/>
</dbReference>
<dbReference type="InterPro" id="IPR017850">
    <property type="entry name" value="Alkaline_phosphatase_core_sf"/>
</dbReference>
<dbReference type="InterPro" id="IPR011258">
    <property type="entry name" value="BPG-indep_PGM_N"/>
</dbReference>
<dbReference type="InterPro" id="IPR006124">
    <property type="entry name" value="Metalloenzyme"/>
</dbReference>
<dbReference type="InterPro" id="IPR036646">
    <property type="entry name" value="PGAM_B_sf"/>
</dbReference>
<dbReference type="InterPro" id="IPR005995">
    <property type="entry name" value="Pgm_bpd_ind"/>
</dbReference>
<dbReference type="NCBIfam" id="TIGR01307">
    <property type="entry name" value="pgm_bpd_ind"/>
    <property type="match status" value="1"/>
</dbReference>
<dbReference type="PANTHER" id="PTHR31637">
    <property type="entry name" value="2,3-BISPHOSPHOGLYCERATE-INDEPENDENT PHOSPHOGLYCERATE MUTASE"/>
    <property type="match status" value="1"/>
</dbReference>
<dbReference type="PANTHER" id="PTHR31637:SF0">
    <property type="entry name" value="2,3-BISPHOSPHOGLYCERATE-INDEPENDENT PHOSPHOGLYCERATE MUTASE"/>
    <property type="match status" value="1"/>
</dbReference>
<dbReference type="Pfam" id="PF06415">
    <property type="entry name" value="iPGM_N"/>
    <property type="match status" value="1"/>
</dbReference>
<dbReference type="Pfam" id="PF01676">
    <property type="entry name" value="Metalloenzyme"/>
    <property type="match status" value="1"/>
</dbReference>
<dbReference type="PIRSF" id="PIRSF001492">
    <property type="entry name" value="IPGAM"/>
    <property type="match status" value="1"/>
</dbReference>
<dbReference type="SUPFAM" id="SSF64158">
    <property type="entry name" value="2,3-Bisphosphoglycerate-independent phosphoglycerate mutase, substrate-binding domain"/>
    <property type="match status" value="1"/>
</dbReference>
<dbReference type="SUPFAM" id="SSF53649">
    <property type="entry name" value="Alkaline phosphatase-like"/>
    <property type="match status" value="1"/>
</dbReference>
<feature type="chain" id="PRO_1000149486" description="2,3-bisphosphoglycerate-independent phosphoglycerate mutase">
    <location>
        <begin position="1"/>
        <end position="540"/>
    </location>
</feature>
<feature type="active site" description="Phosphoserine intermediate" evidence="1">
    <location>
        <position position="63"/>
    </location>
</feature>
<feature type="binding site" evidence="1">
    <location>
        <position position="13"/>
    </location>
    <ligand>
        <name>Mn(2+)</name>
        <dbReference type="ChEBI" id="CHEBI:29035"/>
        <label>2</label>
    </ligand>
</feature>
<feature type="binding site" evidence="1">
    <location>
        <position position="63"/>
    </location>
    <ligand>
        <name>Mn(2+)</name>
        <dbReference type="ChEBI" id="CHEBI:29035"/>
        <label>2</label>
    </ligand>
</feature>
<feature type="binding site" evidence="1">
    <location>
        <position position="124"/>
    </location>
    <ligand>
        <name>substrate</name>
    </ligand>
</feature>
<feature type="binding site" evidence="1">
    <location>
        <begin position="154"/>
        <end position="155"/>
    </location>
    <ligand>
        <name>substrate</name>
    </ligand>
</feature>
<feature type="binding site" evidence="1">
    <location>
        <position position="186"/>
    </location>
    <ligand>
        <name>substrate</name>
    </ligand>
</feature>
<feature type="binding site" evidence="1">
    <location>
        <position position="192"/>
    </location>
    <ligand>
        <name>substrate</name>
    </ligand>
</feature>
<feature type="binding site" evidence="1">
    <location>
        <begin position="262"/>
        <end position="265"/>
    </location>
    <ligand>
        <name>substrate</name>
    </ligand>
</feature>
<feature type="binding site" evidence="1">
    <location>
        <position position="356"/>
    </location>
    <ligand>
        <name>substrate</name>
    </ligand>
</feature>
<feature type="binding site" evidence="1">
    <location>
        <position position="423"/>
    </location>
    <ligand>
        <name>Mn(2+)</name>
        <dbReference type="ChEBI" id="CHEBI:29035"/>
        <label>1</label>
    </ligand>
</feature>
<feature type="binding site" evidence="1">
    <location>
        <position position="427"/>
    </location>
    <ligand>
        <name>Mn(2+)</name>
        <dbReference type="ChEBI" id="CHEBI:29035"/>
        <label>1</label>
    </ligand>
</feature>
<feature type="binding site" evidence="1">
    <location>
        <position position="464"/>
    </location>
    <ligand>
        <name>Mn(2+)</name>
        <dbReference type="ChEBI" id="CHEBI:29035"/>
        <label>2</label>
    </ligand>
</feature>
<feature type="binding site" evidence="1">
    <location>
        <position position="465"/>
    </location>
    <ligand>
        <name>Mn(2+)</name>
        <dbReference type="ChEBI" id="CHEBI:29035"/>
        <label>2</label>
    </ligand>
</feature>
<feature type="binding site" evidence="1">
    <location>
        <position position="483"/>
    </location>
    <ligand>
        <name>Mn(2+)</name>
        <dbReference type="ChEBI" id="CHEBI:29035"/>
        <label>1</label>
    </ligand>
</feature>
<name>GPMI_CHLSY</name>
<keyword id="KW-0324">Glycolysis</keyword>
<keyword id="KW-0413">Isomerase</keyword>
<keyword id="KW-0464">Manganese</keyword>
<keyword id="KW-0479">Metal-binding</keyword>
<protein>
    <recommendedName>
        <fullName evidence="1">2,3-bisphosphoglycerate-independent phosphoglycerate mutase</fullName>
        <shortName evidence="1">BPG-independent PGAM</shortName>
        <shortName evidence="1">Phosphoglyceromutase</shortName>
        <shortName evidence="1">iPGM</shortName>
        <ecNumber evidence="1">5.4.2.12</ecNumber>
    </recommendedName>
</protein>
<proteinExistence type="inferred from homology"/>
<reference key="1">
    <citation type="submission" date="2009-01" db="EMBL/GenBank/DDBJ databases">
        <title>Complete sequence of Chloroflexus sp. Y-400-fl.</title>
        <authorList>
            <consortium name="US DOE Joint Genome Institute"/>
            <person name="Lucas S."/>
            <person name="Copeland A."/>
            <person name="Lapidus A."/>
            <person name="Glavina del Rio T."/>
            <person name="Dalin E."/>
            <person name="Tice H."/>
            <person name="Bruce D."/>
            <person name="Goodwin L."/>
            <person name="Pitluck S."/>
            <person name="Sims D."/>
            <person name="Kiss H."/>
            <person name="Brettin T."/>
            <person name="Detter J.C."/>
            <person name="Han C."/>
            <person name="Larimer F."/>
            <person name="Land M."/>
            <person name="Hauser L."/>
            <person name="Kyrpides N."/>
            <person name="Ovchinnikova G."/>
            <person name="Bryant D.A."/>
            <person name="Richardson P."/>
        </authorList>
    </citation>
    <scope>NUCLEOTIDE SEQUENCE [LARGE SCALE GENOMIC DNA]</scope>
    <source>
        <strain>ATCC 29364 / DSM 637 / Y-400-fl</strain>
    </source>
</reference>
<accession>B9LBA2</accession>
<comment type="function">
    <text evidence="1">Catalyzes the interconversion of 2-phosphoglycerate and 3-phosphoglycerate.</text>
</comment>
<comment type="catalytic activity">
    <reaction evidence="1">
        <text>(2R)-2-phosphoglycerate = (2R)-3-phosphoglycerate</text>
        <dbReference type="Rhea" id="RHEA:15901"/>
        <dbReference type="ChEBI" id="CHEBI:58272"/>
        <dbReference type="ChEBI" id="CHEBI:58289"/>
        <dbReference type="EC" id="5.4.2.12"/>
    </reaction>
</comment>
<comment type="cofactor">
    <cofactor evidence="1">
        <name>Mn(2+)</name>
        <dbReference type="ChEBI" id="CHEBI:29035"/>
    </cofactor>
    <text evidence="1">Binds 2 manganese ions per subunit.</text>
</comment>
<comment type="pathway">
    <text evidence="1">Carbohydrate degradation; glycolysis; pyruvate from D-glyceraldehyde 3-phosphate: step 3/5.</text>
</comment>
<comment type="subunit">
    <text evidence="1">Monomer.</text>
</comment>
<comment type="similarity">
    <text evidence="1">Belongs to the BPG-independent phosphoglycerate mutase family.</text>
</comment>
<sequence>MTRPRPVVLIIMDGWGIAPPGPGNAADLADTPHVDAWMANCPFTTLGASGLDVGLPEGQIGNSEVGHLNIGAGFVVYQELTRISKAIADGDFFTNPVLLQAIEHVKQRNSALHLMGLFGPGGVHAHEDHLHALLELAHRHHLQRVYLHLFLDGRDVLPRSALGFLDTLEGVIARLGVGTIATVSGRYYAMDRDKRWERTGRAYAALVDGVGEKAPSARAAIEASYARDVSDEFVLPTVIVTASGEPTATVRDGDAVIFTNFRPDRGRQLTRAFVDPDLNERIRQHYERQKAEGQPLPATIWQRERQLRDLCFVTMTQYEEGLPVLVAFPPRYVTNPLAAVISQAGLRQFHIAETEKYPHVTFFLNGGREEPFPGEDRQLIPSPKVATYDLKPEMSAPEVTEALLAAIDSDQYDFIVVNYANPDMVGHTGSIPAVIKACEAVDAGLARVVPAILERGGVALVIADHGNAEQMIDPETGGPHTAHTTNPAPCFLIGGAGYGKDAIELRHGGRLADVAPTLLELLELEPSPDMTGQSLIVRRA</sequence>
<evidence type="ECO:0000255" key="1">
    <source>
        <dbReference type="HAMAP-Rule" id="MF_01038"/>
    </source>
</evidence>
<organism>
    <name type="scientific">Chloroflexus aurantiacus (strain ATCC 29364 / DSM 637 / Y-400-fl)</name>
    <dbReference type="NCBI Taxonomy" id="480224"/>
    <lineage>
        <taxon>Bacteria</taxon>
        <taxon>Bacillati</taxon>
        <taxon>Chloroflexota</taxon>
        <taxon>Chloroflexia</taxon>
        <taxon>Chloroflexales</taxon>
        <taxon>Chloroflexineae</taxon>
        <taxon>Chloroflexaceae</taxon>
        <taxon>Chloroflexus</taxon>
    </lineage>
</organism>
<gene>
    <name evidence="1" type="primary">gpmI</name>
    <name type="ordered locus">Chy400_1252</name>
</gene>